<accession>C1CT52</accession>
<sequence>MTKVKICGLSTKEAVETAVSAGADYIGFVFAPSKRQVTLEEAAELAKLIPADVKKVGVFVSPSRVELLEAIDKVGLDLVQVHGQVAADLFENLPCASIQAVQVDGNGHVPNSQADYLLFDAPVAGSGQSFDWGQLDTTGLAQPFFIAGGLNEDNVVKAIQHFTPYAVDVSSGVETDGQKDHEKIRRFIERVKHGISGTK</sequence>
<reference key="1">
    <citation type="journal article" date="2010" name="Genome Biol.">
        <title>Structure and dynamics of the pan-genome of Streptococcus pneumoniae and closely related species.</title>
        <authorList>
            <person name="Donati C."/>
            <person name="Hiller N.L."/>
            <person name="Tettelin H."/>
            <person name="Muzzi A."/>
            <person name="Croucher N.J."/>
            <person name="Angiuoli S.V."/>
            <person name="Oggioni M."/>
            <person name="Dunning Hotopp J.C."/>
            <person name="Hu F.Z."/>
            <person name="Riley D.R."/>
            <person name="Covacci A."/>
            <person name="Mitchell T.J."/>
            <person name="Bentley S.D."/>
            <person name="Kilian M."/>
            <person name="Ehrlich G.D."/>
            <person name="Rappuoli R."/>
            <person name="Moxon E.R."/>
            <person name="Masignani V."/>
        </authorList>
    </citation>
    <scope>NUCLEOTIDE SEQUENCE [LARGE SCALE GENOMIC DNA]</scope>
    <source>
        <strain>Taiwan19F-14</strain>
    </source>
</reference>
<keyword id="KW-0028">Amino-acid biosynthesis</keyword>
<keyword id="KW-0057">Aromatic amino acid biosynthesis</keyword>
<keyword id="KW-0413">Isomerase</keyword>
<keyword id="KW-0822">Tryptophan biosynthesis</keyword>
<protein>
    <recommendedName>
        <fullName evidence="1">N-(5'-phosphoribosyl)anthranilate isomerase</fullName>
        <shortName evidence="1">PRAI</shortName>
        <ecNumber evidence="1">5.3.1.24</ecNumber>
    </recommendedName>
</protein>
<dbReference type="EC" id="5.3.1.24" evidence="1"/>
<dbReference type="EMBL" id="CP000921">
    <property type="protein sequence ID" value="ACO22268.1"/>
    <property type="molecule type" value="Genomic_DNA"/>
</dbReference>
<dbReference type="RefSeq" id="WP_000169887.1">
    <property type="nucleotide sequence ID" value="NC_012469.1"/>
</dbReference>
<dbReference type="SMR" id="C1CT52"/>
<dbReference type="KEGG" id="snt:SPT_1736"/>
<dbReference type="HOGENOM" id="CLU_076364_1_0_9"/>
<dbReference type="UniPathway" id="UPA00035">
    <property type="reaction ID" value="UER00042"/>
</dbReference>
<dbReference type="GO" id="GO:0004640">
    <property type="term" value="F:phosphoribosylanthranilate isomerase activity"/>
    <property type="evidence" value="ECO:0007669"/>
    <property type="project" value="UniProtKB-UniRule"/>
</dbReference>
<dbReference type="GO" id="GO:0000162">
    <property type="term" value="P:L-tryptophan biosynthetic process"/>
    <property type="evidence" value="ECO:0007669"/>
    <property type="project" value="UniProtKB-UniRule"/>
</dbReference>
<dbReference type="CDD" id="cd00405">
    <property type="entry name" value="PRAI"/>
    <property type="match status" value="1"/>
</dbReference>
<dbReference type="FunFam" id="3.20.20.70:FF:000075">
    <property type="entry name" value="Tryptophan biosynthesis protein TRP1"/>
    <property type="match status" value="1"/>
</dbReference>
<dbReference type="Gene3D" id="3.20.20.70">
    <property type="entry name" value="Aldolase class I"/>
    <property type="match status" value="1"/>
</dbReference>
<dbReference type="HAMAP" id="MF_00135">
    <property type="entry name" value="PRAI"/>
    <property type="match status" value="1"/>
</dbReference>
<dbReference type="InterPro" id="IPR013785">
    <property type="entry name" value="Aldolase_TIM"/>
</dbReference>
<dbReference type="InterPro" id="IPR001240">
    <property type="entry name" value="PRAI_dom"/>
</dbReference>
<dbReference type="InterPro" id="IPR011060">
    <property type="entry name" value="RibuloseP-bd_barrel"/>
</dbReference>
<dbReference type="InterPro" id="IPR044643">
    <property type="entry name" value="TrpF_fam"/>
</dbReference>
<dbReference type="NCBIfam" id="NF002300">
    <property type="entry name" value="PRK01222.1-7"/>
    <property type="match status" value="1"/>
</dbReference>
<dbReference type="PANTHER" id="PTHR42894">
    <property type="entry name" value="N-(5'-PHOSPHORIBOSYL)ANTHRANILATE ISOMERASE"/>
    <property type="match status" value="1"/>
</dbReference>
<dbReference type="PANTHER" id="PTHR42894:SF1">
    <property type="entry name" value="N-(5'-PHOSPHORIBOSYL)ANTHRANILATE ISOMERASE"/>
    <property type="match status" value="1"/>
</dbReference>
<dbReference type="Pfam" id="PF00697">
    <property type="entry name" value="PRAI"/>
    <property type="match status" value="1"/>
</dbReference>
<dbReference type="SUPFAM" id="SSF51366">
    <property type="entry name" value="Ribulose-phoshate binding barrel"/>
    <property type="match status" value="1"/>
</dbReference>
<feature type="chain" id="PRO_1000197128" description="N-(5'-phosphoribosyl)anthranilate isomerase">
    <location>
        <begin position="1"/>
        <end position="199"/>
    </location>
</feature>
<name>TRPF_STRZT</name>
<comment type="catalytic activity">
    <reaction evidence="1">
        <text>N-(5-phospho-beta-D-ribosyl)anthranilate = 1-(2-carboxyphenylamino)-1-deoxy-D-ribulose 5-phosphate</text>
        <dbReference type="Rhea" id="RHEA:21540"/>
        <dbReference type="ChEBI" id="CHEBI:18277"/>
        <dbReference type="ChEBI" id="CHEBI:58613"/>
        <dbReference type="EC" id="5.3.1.24"/>
    </reaction>
</comment>
<comment type="pathway">
    <text evidence="1">Amino-acid biosynthesis; L-tryptophan biosynthesis; L-tryptophan from chorismate: step 3/5.</text>
</comment>
<comment type="similarity">
    <text evidence="1">Belongs to the TrpF family.</text>
</comment>
<proteinExistence type="inferred from homology"/>
<evidence type="ECO:0000255" key="1">
    <source>
        <dbReference type="HAMAP-Rule" id="MF_00135"/>
    </source>
</evidence>
<organism>
    <name type="scientific">Streptococcus pneumoniae (strain Taiwan19F-14)</name>
    <dbReference type="NCBI Taxonomy" id="487213"/>
    <lineage>
        <taxon>Bacteria</taxon>
        <taxon>Bacillati</taxon>
        <taxon>Bacillota</taxon>
        <taxon>Bacilli</taxon>
        <taxon>Lactobacillales</taxon>
        <taxon>Streptococcaceae</taxon>
        <taxon>Streptococcus</taxon>
    </lineage>
</organism>
<gene>
    <name evidence="1" type="primary">trpF</name>
    <name type="ordered locus">SPT_1736</name>
</gene>